<organism>
    <name type="scientific">Dictyostelium discoideum</name>
    <name type="common">Social amoeba</name>
    <dbReference type="NCBI Taxonomy" id="44689"/>
    <lineage>
        <taxon>Eukaryota</taxon>
        <taxon>Amoebozoa</taxon>
        <taxon>Evosea</taxon>
        <taxon>Eumycetozoa</taxon>
        <taxon>Dictyostelia</taxon>
        <taxon>Dictyosteliales</taxon>
        <taxon>Dictyosteliaceae</taxon>
        <taxon>Dictyostelium</taxon>
    </lineage>
</organism>
<evidence type="ECO:0000250" key="1">
    <source>
        <dbReference type="UniProtKB" id="P45954"/>
    </source>
</evidence>
<evidence type="ECO:0000250" key="2">
    <source>
        <dbReference type="UniProtKB" id="P70584"/>
    </source>
</evidence>
<evidence type="ECO:0000305" key="3"/>
<proteinExistence type="inferred from homology"/>
<accession>Q54RR5</accession>
<feature type="chain" id="PRO_0000330466" description="Probable short/branched chain specific acyl-CoA dehydrogenase">
    <location>
        <begin position="1"/>
        <end position="413"/>
    </location>
</feature>
<feature type="active site" description="Proton acceptor" evidence="1">
    <location>
        <position position="393"/>
    </location>
</feature>
<feature type="binding site" description="in other chain" evidence="1">
    <location>
        <begin position="152"/>
        <end position="161"/>
    </location>
    <ligand>
        <name>FAD</name>
        <dbReference type="ChEBI" id="CHEBI:57692"/>
        <note>ligand shared between dimeric partners</note>
    </ligand>
</feature>
<feature type="binding site" evidence="1">
    <location>
        <position position="161"/>
    </location>
    <ligand>
        <name>substrate</name>
    </ligand>
</feature>
<feature type="binding site" description="in other chain" evidence="1">
    <location>
        <begin position="186"/>
        <end position="188"/>
    </location>
    <ligand>
        <name>FAD</name>
        <dbReference type="ChEBI" id="CHEBI:57692"/>
        <note>ligand shared between dimeric partners</note>
    </ligand>
</feature>
<feature type="binding site" evidence="1">
    <location>
        <position position="208"/>
    </location>
    <ligand>
        <name>substrate</name>
    </ligand>
</feature>
<feature type="binding site" evidence="1">
    <location>
        <position position="262"/>
    </location>
    <ligand>
        <name>substrate</name>
    </ligand>
</feature>
<feature type="binding site" evidence="1">
    <location>
        <begin position="270"/>
        <end position="273"/>
    </location>
    <ligand>
        <name>substrate</name>
    </ligand>
</feature>
<feature type="binding site" evidence="1">
    <location>
        <position position="298"/>
    </location>
    <ligand>
        <name>FAD</name>
        <dbReference type="ChEBI" id="CHEBI:57692"/>
        <note>ligand shared between dimeric partners</note>
    </ligand>
</feature>
<feature type="binding site" evidence="1">
    <location>
        <position position="309"/>
    </location>
    <ligand>
        <name>FAD</name>
        <dbReference type="ChEBI" id="CHEBI:57692"/>
        <note>ligand shared between dimeric partners</note>
    </ligand>
</feature>
<feature type="binding site" evidence="1">
    <location>
        <begin position="366"/>
        <end position="370"/>
    </location>
    <ligand>
        <name>FAD</name>
        <dbReference type="ChEBI" id="CHEBI:57692"/>
        <note>ligand shared between dimeric partners</note>
    </ligand>
</feature>
<feature type="binding site" description="in other chain" evidence="1">
    <location>
        <begin position="395"/>
        <end position="397"/>
    </location>
    <ligand>
        <name>FAD</name>
        <dbReference type="ChEBI" id="CHEBI:57692"/>
        <note>ligand shared between dimeric partners</note>
    </ligand>
</feature>
<gene>
    <name type="primary">acadsb</name>
    <name type="ORF">DDB_G0282967</name>
</gene>
<comment type="function">
    <text evidence="2">Probable short and branched chain specific acyl-CoA dehydrogenase that catalyzes the removal of one hydrogen from C-2 and C-3 of the fatty acyl-CoA thioester, resulting in the formation of trans-2-enoyl-CoA.</text>
</comment>
<comment type="catalytic activity">
    <reaction evidence="2">
        <text>2-methylbutanoyl-CoA + oxidized [electron-transfer flavoprotein] + H(+) = (2E)-2-methylbut-2-enoyl-CoA + reduced [electron-transfer flavoprotein]</text>
        <dbReference type="Rhea" id="RHEA:43780"/>
        <dbReference type="Rhea" id="RHEA-COMP:10685"/>
        <dbReference type="Rhea" id="RHEA-COMP:10686"/>
        <dbReference type="ChEBI" id="CHEBI:15378"/>
        <dbReference type="ChEBI" id="CHEBI:57336"/>
        <dbReference type="ChEBI" id="CHEBI:57337"/>
        <dbReference type="ChEBI" id="CHEBI:57692"/>
        <dbReference type="ChEBI" id="CHEBI:58307"/>
        <dbReference type="EC" id="1.3.8.5"/>
    </reaction>
    <physiologicalReaction direction="left-to-right" evidence="2">
        <dbReference type="Rhea" id="RHEA:43781"/>
    </physiologicalReaction>
</comment>
<comment type="cofactor">
    <cofactor evidence="1">
        <name>FAD</name>
        <dbReference type="ChEBI" id="CHEBI:57692"/>
    </cofactor>
</comment>
<comment type="pathway">
    <text evidence="1">Lipid metabolism; mitochondrial fatty acid beta-oxidation.</text>
</comment>
<comment type="pathway">
    <text evidence="1">Amino-acid degradation; L-isoleucine degradation.</text>
</comment>
<comment type="subunit">
    <text evidence="1">Homotetramer.</text>
</comment>
<comment type="similarity">
    <text evidence="3">Belongs to the acyl-CoA dehydrogenase family.</text>
</comment>
<dbReference type="EC" id="1.3.8.5" evidence="2"/>
<dbReference type="EMBL" id="AAFI02000049">
    <property type="protein sequence ID" value="EAL65927.1"/>
    <property type="molecule type" value="Genomic_DNA"/>
</dbReference>
<dbReference type="RefSeq" id="XP_639286.1">
    <property type="nucleotide sequence ID" value="XM_634194.1"/>
</dbReference>
<dbReference type="SMR" id="Q54RR5"/>
<dbReference type="FunCoup" id="Q54RR5">
    <property type="interactions" value="175"/>
</dbReference>
<dbReference type="STRING" id="44689.Q54RR5"/>
<dbReference type="PaxDb" id="44689-DDB0237707"/>
<dbReference type="EnsemblProtists" id="EAL65927">
    <property type="protein sequence ID" value="EAL65927"/>
    <property type="gene ID" value="DDB_G0282967"/>
</dbReference>
<dbReference type="GeneID" id="8623855"/>
<dbReference type="KEGG" id="ddi:DDB_G0282967"/>
<dbReference type="dictyBase" id="DDB_G0282967">
    <property type="gene designation" value="acadsb"/>
</dbReference>
<dbReference type="VEuPathDB" id="AmoebaDB:DDB_G0282967"/>
<dbReference type="eggNOG" id="KOG0139">
    <property type="taxonomic scope" value="Eukaryota"/>
</dbReference>
<dbReference type="HOGENOM" id="CLU_018204_0_0_1"/>
<dbReference type="InParanoid" id="Q54RR5"/>
<dbReference type="OMA" id="DAMFSYC"/>
<dbReference type="PhylomeDB" id="Q54RR5"/>
<dbReference type="Reactome" id="R-DDI-70895">
    <property type="pathway name" value="Branched-chain amino acid catabolism"/>
</dbReference>
<dbReference type="Reactome" id="R-DDI-9837999">
    <property type="pathway name" value="Mitochondrial protein degradation"/>
</dbReference>
<dbReference type="UniPathway" id="UPA00364"/>
<dbReference type="UniPathway" id="UPA00660"/>
<dbReference type="PRO" id="PR:Q54RR5"/>
<dbReference type="Proteomes" id="UP000002195">
    <property type="component" value="Chromosome 4"/>
</dbReference>
<dbReference type="GO" id="GO:0005739">
    <property type="term" value="C:mitochondrion"/>
    <property type="evidence" value="ECO:0000318"/>
    <property type="project" value="GO_Central"/>
</dbReference>
<dbReference type="GO" id="GO:0003995">
    <property type="term" value="F:acyl-CoA dehydrogenase activity"/>
    <property type="evidence" value="ECO:0000318"/>
    <property type="project" value="GO_Central"/>
</dbReference>
<dbReference type="GO" id="GO:0050660">
    <property type="term" value="F:flavin adenine dinucleotide binding"/>
    <property type="evidence" value="ECO:0007669"/>
    <property type="project" value="InterPro"/>
</dbReference>
<dbReference type="GO" id="GO:0003853">
    <property type="term" value="F:short-chain 2-methyl fatty acyl-CoA dehydrogenase activity"/>
    <property type="evidence" value="ECO:0007669"/>
    <property type="project" value="UniProtKB-EC"/>
</dbReference>
<dbReference type="GO" id="GO:0006631">
    <property type="term" value="P:fatty acid metabolic process"/>
    <property type="evidence" value="ECO:0007669"/>
    <property type="project" value="UniProtKB-KW"/>
</dbReference>
<dbReference type="GO" id="GO:0006550">
    <property type="term" value="P:isoleucine catabolic process"/>
    <property type="evidence" value="ECO:0007669"/>
    <property type="project" value="UniProtKB-UniPathway"/>
</dbReference>
<dbReference type="FunFam" id="1.10.540.10:FF:000026">
    <property type="entry name" value="Acyl-CoA dehydrogenase medium chain"/>
    <property type="match status" value="1"/>
</dbReference>
<dbReference type="FunFam" id="1.20.140.10:FF:000002">
    <property type="entry name" value="Acyl-CoA dehydrogenase short/branched chain"/>
    <property type="match status" value="1"/>
</dbReference>
<dbReference type="FunFam" id="2.40.110.10:FF:000001">
    <property type="entry name" value="Acyl-CoA dehydrogenase, mitochondrial"/>
    <property type="match status" value="1"/>
</dbReference>
<dbReference type="Gene3D" id="1.10.540.10">
    <property type="entry name" value="Acyl-CoA dehydrogenase/oxidase, N-terminal domain"/>
    <property type="match status" value="1"/>
</dbReference>
<dbReference type="Gene3D" id="2.40.110.10">
    <property type="entry name" value="Butyryl-CoA Dehydrogenase, subunit A, domain 2"/>
    <property type="match status" value="1"/>
</dbReference>
<dbReference type="Gene3D" id="1.20.140.10">
    <property type="entry name" value="Butyryl-CoA Dehydrogenase, subunit A, domain 3"/>
    <property type="match status" value="1"/>
</dbReference>
<dbReference type="InterPro" id="IPR006089">
    <property type="entry name" value="Acyl-CoA_DH_CS"/>
</dbReference>
<dbReference type="InterPro" id="IPR006091">
    <property type="entry name" value="Acyl-CoA_Oxase/DH_mid-dom"/>
</dbReference>
<dbReference type="InterPro" id="IPR046373">
    <property type="entry name" value="Acyl-CoA_Oxase/DH_mid-dom_sf"/>
</dbReference>
<dbReference type="InterPro" id="IPR036250">
    <property type="entry name" value="AcylCo_DH-like_C"/>
</dbReference>
<dbReference type="InterPro" id="IPR009075">
    <property type="entry name" value="AcylCo_DH/oxidase_C"/>
</dbReference>
<dbReference type="InterPro" id="IPR013786">
    <property type="entry name" value="AcylCoA_DH/ox_N"/>
</dbReference>
<dbReference type="InterPro" id="IPR037069">
    <property type="entry name" value="AcylCoA_DH/ox_N_sf"/>
</dbReference>
<dbReference type="InterPro" id="IPR009100">
    <property type="entry name" value="AcylCoA_DH/oxidase_NM_dom_sf"/>
</dbReference>
<dbReference type="PANTHER" id="PTHR43884">
    <property type="entry name" value="ACYL-COA DEHYDROGENASE"/>
    <property type="match status" value="1"/>
</dbReference>
<dbReference type="PANTHER" id="PTHR43884:SF1">
    <property type="entry name" value="SHORT_BRANCHED CHAIN SPECIFIC ACYL-COA DEHYDROGENASE, MITOCHONDRIAL"/>
    <property type="match status" value="1"/>
</dbReference>
<dbReference type="Pfam" id="PF00441">
    <property type="entry name" value="Acyl-CoA_dh_1"/>
    <property type="match status" value="1"/>
</dbReference>
<dbReference type="Pfam" id="PF02770">
    <property type="entry name" value="Acyl-CoA_dh_M"/>
    <property type="match status" value="1"/>
</dbReference>
<dbReference type="Pfam" id="PF02771">
    <property type="entry name" value="Acyl-CoA_dh_N"/>
    <property type="match status" value="1"/>
</dbReference>
<dbReference type="SUPFAM" id="SSF47203">
    <property type="entry name" value="Acyl-CoA dehydrogenase C-terminal domain-like"/>
    <property type="match status" value="1"/>
</dbReference>
<dbReference type="SUPFAM" id="SSF56645">
    <property type="entry name" value="Acyl-CoA dehydrogenase NM domain-like"/>
    <property type="match status" value="1"/>
</dbReference>
<dbReference type="PROSITE" id="PS00072">
    <property type="entry name" value="ACYL_COA_DH_1"/>
    <property type="match status" value="1"/>
</dbReference>
<sequence>MIKKLILDPKNVSIIKNGIRNYSKSKSFIQPITTLSEEETLLKETVANFANEKVRPLVKVMDETSELNKGLLKDLFDMNLMGIDISDSYGGANMNFMGSIIAIEELAKVDPAISVIVDVQNTLVNNCINRYGSIQQREKYLSMLATNTVGSFCLSESGSGSDAFALATRAVRQSDGTFVLNGTKQWITNAKEAGVFIVMANVDPSQGYKGITAFIVESNNPGLRIGKKEDKLGIRASSTCEVILDNCVVKPTDILGELGRGYKIAIEGLNEGRIGIAAQMLGLAQGVFDSTIPYLMERKQFGKPIATFQGMQFTYADLAVDIEAGRLLTYNAARIKEAGLPFVFQASMAKLHCSRVAEKAASACISMLGGVGFTKEFPAEKFFRDSKVGQIYEGTSNIQLQTIAKEIVKNFNK</sequence>
<keyword id="KW-0274">FAD</keyword>
<keyword id="KW-0276">Fatty acid metabolism</keyword>
<keyword id="KW-0285">Flavoprotein</keyword>
<keyword id="KW-0443">Lipid metabolism</keyword>
<keyword id="KW-0560">Oxidoreductase</keyword>
<keyword id="KW-1185">Reference proteome</keyword>
<name>ACDSB_DICDI</name>
<reference key="1">
    <citation type="journal article" date="2005" name="Nature">
        <title>The genome of the social amoeba Dictyostelium discoideum.</title>
        <authorList>
            <person name="Eichinger L."/>
            <person name="Pachebat J.A."/>
            <person name="Gloeckner G."/>
            <person name="Rajandream M.A."/>
            <person name="Sucgang R."/>
            <person name="Berriman M."/>
            <person name="Song J."/>
            <person name="Olsen R."/>
            <person name="Szafranski K."/>
            <person name="Xu Q."/>
            <person name="Tunggal B."/>
            <person name="Kummerfeld S."/>
            <person name="Madera M."/>
            <person name="Konfortov B.A."/>
            <person name="Rivero F."/>
            <person name="Bankier A.T."/>
            <person name="Lehmann R."/>
            <person name="Hamlin N."/>
            <person name="Davies R."/>
            <person name="Gaudet P."/>
            <person name="Fey P."/>
            <person name="Pilcher K."/>
            <person name="Chen G."/>
            <person name="Saunders D."/>
            <person name="Sodergren E.J."/>
            <person name="Davis P."/>
            <person name="Kerhornou A."/>
            <person name="Nie X."/>
            <person name="Hall N."/>
            <person name="Anjard C."/>
            <person name="Hemphill L."/>
            <person name="Bason N."/>
            <person name="Farbrother P."/>
            <person name="Desany B."/>
            <person name="Just E."/>
            <person name="Morio T."/>
            <person name="Rost R."/>
            <person name="Churcher C.M."/>
            <person name="Cooper J."/>
            <person name="Haydock S."/>
            <person name="van Driessche N."/>
            <person name="Cronin A."/>
            <person name="Goodhead I."/>
            <person name="Muzny D.M."/>
            <person name="Mourier T."/>
            <person name="Pain A."/>
            <person name="Lu M."/>
            <person name="Harper D."/>
            <person name="Lindsay R."/>
            <person name="Hauser H."/>
            <person name="James K.D."/>
            <person name="Quiles M."/>
            <person name="Madan Babu M."/>
            <person name="Saito T."/>
            <person name="Buchrieser C."/>
            <person name="Wardroper A."/>
            <person name="Felder M."/>
            <person name="Thangavelu M."/>
            <person name="Johnson D."/>
            <person name="Knights A."/>
            <person name="Loulseged H."/>
            <person name="Mungall K.L."/>
            <person name="Oliver K."/>
            <person name="Price C."/>
            <person name="Quail M.A."/>
            <person name="Urushihara H."/>
            <person name="Hernandez J."/>
            <person name="Rabbinowitsch E."/>
            <person name="Steffen D."/>
            <person name="Sanders M."/>
            <person name="Ma J."/>
            <person name="Kohara Y."/>
            <person name="Sharp S."/>
            <person name="Simmonds M.N."/>
            <person name="Spiegler S."/>
            <person name="Tivey A."/>
            <person name="Sugano S."/>
            <person name="White B."/>
            <person name="Walker D."/>
            <person name="Woodward J.R."/>
            <person name="Winckler T."/>
            <person name="Tanaka Y."/>
            <person name="Shaulsky G."/>
            <person name="Schleicher M."/>
            <person name="Weinstock G.M."/>
            <person name="Rosenthal A."/>
            <person name="Cox E.C."/>
            <person name="Chisholm R.L."/>
            <person name="Gibbs R.A."/>
            <person name="Loomis W.F."/>
            <person name="Platzer M."/>
            <person name="Kay R.R."/>
            <person name="Williams J.G."/>
            <person name="Dear P.H."/>
            <person name="Noegel A.A."/>
            <person name="Barrell B.G."/>
            <person name="Kuspa A."/>
        </authorList>
    </citation>
    <scope>NUCLEOTIDE SEQUENCE [LARGE SCALE GENOMIC DNA]</scope>
    <source>
        <strain>AX4</strain>
    </source>
</reference>
<protein>
    <recommendedName>
        <fullName evidence="2">Probable short/branched chain specific acyl-CoA dehydrogenase</fullName>
        <shortName evidence="2">SBCAD</shortName>
        <ecNumber evidence="2">1.3.8.5</ecNumber>
    </recommendedName>
</protein>